<comment type="function">
    <text>One gap junction consists of a cluster of closely packed pairs of transmembrane channels, the connexons, through which materials of low MW diffuse from one cell to a neighboring cell.</text>
</comment>
<comment type="subunit">
    <text>A connexon is composed of a hexamer of connexins.</text>
</comment>
<comment type="subcellular location">
    <subcellularLocation>
        <location>Cell membrane</location>
        <topology>Multi-pass membrane protein</topology>
    </subcellularLocation>
    <subcellularLocation>
        <location>Cell junction</location>
        <location>Gap junction</location>
    </subcellularLocation>
</comment>
<comment type="tissue specificity">
    <text>Expressed equally in incompetent and competent ovaries.</text>
</comment>
<comment type="similarity">
    <text evidence="3">Belongs to the connexin family. Alpha-type (group II) subfamily.</text>
</comment>
<keyword id="KW-0965">Cell junction</keyword>
<keyword id="KW-1003">Cell membrane</keyword>
<keyword id="KW-0303">Gap junction</keyword>
<keyword id="KW-0472">Membrane</keyword>
<keyword id="KW-0812">Transmembrane</keyword>
<keyword id="KW-1133">Transmembrane helix</keyword>
<reference key="1">
    <citation type="journal article" date="1994" name="Biol. Reprod.">
        <title>Connexin messenger ribonucleic acids in the ovary of Atlantic croaker: molecular cloning and characterization, hormonal control, and correlation with appearance of oocyte maturational competence.</title>
        <authorList>
            <person name="Yoshizaki G."/>
            <person name="Patino R."/>
            <person name="Thomas P."/>
        </authorList>
    </citation>
    <scope>NUCLEOTIDE SEQUENCE [MRNA]</scope>
    <source>
        <tissue>Ovary</tissue>
    </source>
</reference>
<sequence length="282" mass="32690">MGEWDLLGRLLDKVQSHSTVIGKVWLTVLFVFRILVLRTGADRVWGDEQSDFVCNTQQPGCENVCYDLAFPISHVRFWFLQIIAVATPKLLYLGHVLHVIHAEKKMKERMKKQAELDDQTNLFLRKAYKVPKYTKSSGKISIRGRLLRSYVYHLVAKIILEVLFIVGQYFLYGFTLDTRYVCTRFPCPHKVDCFLSRPTEKSVIIWFMLVAAFVSLFLSLVELFYLCVKAAKECMARRQDYTVTPVTPPLLARKSFKSHKEVFQNCVNEPASPENNMEEVHI</sequence>
<accession>P51916</accession>
<evidence type="ECO:0000250" key="1"/>
<evidence type="ECO:0000255" key="2"/>
<evidence type="ECO:0000305" key="3"/>
<dbReference type="EMBL" id="L31541">
    <property type="protein sequence ID" value="AAA66970.1"/>
    <property type="molecule type" value="mRNA"/>
</dbReference>
<dbReference type="PIR" id="I50996">
    <property type="entry name" value="I50996"/>
</dbReference>
<dbReference type="SMR" id="P51916"/>
<dbReference type="GO" id="GO:0005922">
    <property type="term" value="C:connexin complex"/>
    <property type="evidence" value="ECO:0007669"/>
    <property type="project" value="InterPro"/>
</dbReference>
<dbReference type="GO" id="GO:0005243">
    <property type="term" value="F:gap junction channel activity"/>
    <property type="evidence" value="ECO:0007669"/>
    <property type="project" value="TreeGrafter"/>
</dbReference>
<dbReference type="GO" id="GO:0007267">
    <property type="term" value="P:cell-cell signaling"/>
    <property type="evidence" value="ECO:0007669"/>
    <property type="project" value="TreeGrafter"/>
</dbReference>
<dbReference type="FunFam" id="1.20.1440.80:FF:000001">
    <property type="entry name" value="Gap junction alpha-1"/>
    <property type="match status" value="1"/>
</dbReference>
<dbReference type="Gene3D" id="1.20.1440.80">
    <property type="entry name" value="Gap junction channel protein cysteine-rich domain"/>
    <property type="match status" value="1"/>
</dbReference>
<dbReference type="InterPro" id="IPR000500">
    <property type="entry name" value="Connexin"/>
</dbReference>
<dbReference type="InterPro" id="IPR019570">
    <property type="entry name" value="Connexin_CCC"/>
</dbReference>
<dbReference type="InterPro" id="IPR017990">
    <property type="entry name" value="Connexin_CS"/>
</dbReference>
<dbReference type="InterPro" id="IPR013092">
    <property type="entry name" value="Connexin_N"/>
</dbReference>
<dbReference type="InterPro" id="IPR038359">
    <property type="entry name" value="Connexin_N_sf"/>
</dbReference>
<dbReference type="PANTHER" id="PTHR11984">
    <property type="entry name" value="CONNEXIN"/>
    <property type="match status" value="1"/>
</dbReference>
<dbReference type="PANTHER" id="PTHR11984:SF105">
    <property type="entry name" value="GAP JUNCTION PROTEIN"/>
    <property type="match status" value="1"/>
</dbReference>
<dbReference type="Pfam" id="PF00029">
    <property type="entry name" value="Connexin"/>
    <property type="match status" value="1"/>
</dbReference>
<dbReference type="PRINTS" id="PR00206">
    <property type="entry name" value="CONNEXIN"/>
</dbReference>
<dbReference type="SMART" id="SM00037">
    <property type="entry name" value="CNX"/>
    <property type="match status" value="1"/>
</dbReference>
<dbReference type="SMART" id="SM01089">
    <property type="entry name" value="Connexin_CCC"/>
    <property type="match status" value="1"/>
</dbReference>
<dbReference type="PROSITE" id="PS00407">
    <property type="entry name" value="CONNEXINS_1"/>
    <property type="match status" value="1"/>
</dbReference>
<dbReference type="PROSITE" id="PS00408">
    <property type="entry name" value="CONNEXINS_2"/>
    <property type="match status" value="1"/>
</dbReference>
<name>CX33_MICUN</name>
<organism>
    <name type="scientific">Micropogonias undulatus</name>
    <name type="common">Atlantic croaker</name>
    <dbReference type="NCBI Taxonomy" id="29154"/>
    <lineage>
        <taxon>Eukaryota</taxon>
        <taxon>Metazoa</taxon>
        <taxon>Chordata</taxon>
        <taxon>Craniata</taxon>
        <taxon>Vertebrata</taxon>
        <taxon>Euteleostomi</taxon>
        <taxon>Actinopterygii</taxon>
        <taxon>Neopterygii</taxon>
        <taxon>Teleostei</taxon>
        <taxon>Neoteleostei</taxon>
        <taxon>Acanthomorphata</taxon>
        <taxon>Eupercaria</taxon>
        <taxon>Sciaenidae</taxon>
        <taxon>Micropogonias</taxon>
    </lineage>
</organism>
<protein>
    <recommendedName>
        <fullName>Gap junction Cx32.7 protein</fullName>
    </recommendedName>
    <alternativeName>
        <fullName>Connexin-32.7</fullName>
    </alternativeName>
</protein>
<proteinExistence type="evidence at transcript level"/>
<feature type="initiator methionine" description="Removed" evidence="1">
    <location>
        <position position="1"/>
    </location>
</feature>
<feature type="chain" id="PRO_0000057846" description="Gap junction Cx32.7 protein">
    <location>
        <begin position="2"/>
        <end position="282"/>
    </location>
</feature>
<feature type="topological domain" description="Cytoplasmic" evidence="2">
    <location>
        <begin position="2"/>
        <end position="13"/>
    </location>
</feature>
<feature type="transmembrane region" description="Helical" evidence="2">
    <location>
        <begin position="14"/>
        <end position="36"/>
    </location>
</feature>
<feature type="topological domain" description="Extracellular" evidence="2">
    <location>
        <begin position="37"/>
        <end position="76"/>
    </location>
</feature>
<feature type="transmembrane region" description="Helical" evidence="2">
    <location>
        <begin position="77"/>
        <end position="99"/>
    </location>
</feature>
<feature type="topological domain" description="Cytoplasmic" evidence="2">
    <location>
        <begin position="100"/>
        <end position="148"/>
    </location>
</feature>
<feature type="transmembrane region" description="Helical" evidence="2">
    <location>
        <begin position="149"/>
        <end position="171"/>
    </location>
</feature>
<feature type="topological domain" description="Extracellular" evidence="2">
    <location>
        <begin position="172"/>
        <end position="203"/>
    </location>
</feature>
<feature type="transmembrane region" description="Helical" evidence="2">
    <location>
        <begin position="204"/>
        <end position="226"/>
    </location>
</feature>
<feature type="topological domain" description="Cytoplasmic" evidence="2">
    <location>
        <begin position="227"/>
        <end position="282"/>
    </location>
</feature>